<feature type="chain" id="PRO_1000139457" description="CTP synthase">
    <location>
        <begin position="1"/>
        <end position="537"/>
    </location>
</feature>
<feature type="domain" description="Glutamine amidotransferase type-1" evidence="1">
    <location>
        <begin position="295"/>
        <end position="537"/>
    </location>
</feature>
<feature type="region of interest" description="Amidoligase domain" evidence="1">
    <location>
        <begin position="1"/>
        <end position="269"/>
    </location>
</feature>
<feature type="active site" description="Nucleophile; for glutamine hydrolysis" evidence="1">
    <location>
        <position position="384"/>
    </location>
</feature>
<feature type="active site" evidence="1">
    <location>
        <position position="510"/>
    </location>
</feature>
<feature type="active site" evidence="1">
    <location>
        <position position="512"/>
    </location>
</feature>
<feature type="binding site" evidence="1">
    <location>
        <position position="15"/>
    </location>
    <ligand>
        <name>CTP</name>
        <dbReference type="ChEBI" id="CHEBI:37563"/>
        <note>allosteric inhibitor</note>
    </ligand>
</feature>
<feature type="binding site" evidence="1">
    <location>
        <position position="15"/>
    </location>
    <ligand>
        <name>UTP</name>
        <dbReference type="ChEBI" id="CHEBI:46398"/>
    </ligand>
</feature>
<feature type="binding site" evidence="1">
    <location>
        <begin position="16"/>
        <end position="21"/>
    </location>
    <ligand>
        <name>ATP</name>
        <dbReference type="ChEBI" id="CHEBI:30616"/>
    </ligand>
</feature>
<feature type="binding site" evidence="1">
    <location>
        <position position="56"/>
    </location>
    <ligand>
        <name>L-glutamine</name>
        <dbReference type="ChEBI" id="CHEBI:58359"/>
    </ligand>
</feature>
<feature type="binding site" evidence="1">
    <location>
        <position position="73"/>
    </location>
    <ligand>
        <name>ATP</name>
        <dbReference type="ChEBI" id="CHEBI:30616"/>
    </ligand>
</feature>
<feature type="binding site" evidence="1">
    <location>
        <position position="73"/>
    </location>
    <ligand>
        <name>Mg(2+)</name>
        <dbReference type="ChEBI" id="CHEBI:18420"/>
    </ligand>
</feature>
<feature type="binding site" evidence="1">
    <location>
        <position position="143"/>
    </location>
    <ligand>
        <name>Mg(2+)</name>
        <dbReference type="ChEBI" id="CHEBI:18420"/>
    </ligand>
</feature>
<feature type="binding site" evidence="1">
    <location>
        <begin position="150"/>
        <end position="152"/>
    </location>
    <ligand>
        <name>CTP</name>
        <dbReference type="ChEBI" id="CHEBI:37563"/>
        <note>allosteric inhibitor</note>
    </ligand>
</feature>
<feature type="binding site" evidence="1">
    <location>
        <begin position="190"/>
        <end position="195"/>
    </location>
    <ligand>
        <name>CTP</name>
        <dbReference type="ChEBI" id="CHEBI:37563"/>
        <note>allosteric inhibitor</note>
    </ligand>
</feature>
<feature type="binding site" evidence="1">
    <location>
        <begin position="190"/>
        <end position="195"/>
    </location>
    <ligand>
        <name>UTP</name>
        <dbReference type="ChEBI" id="CHEBI:46398"/>
    </ligand>
</feature>
<feature type="binding site" evidence="1">
    <location>
        <position position="226"/>
    </location>
    <ligand>
        <name>CTP</name>
        <dbReference type="ChEBI" id="CHEBI:37563"/>
        <note>allosteric inhibitor</note>
    </ligand>
</feature>
<feature type="binding site" evidence="1">
    <location>
        <position position="226"/>
    </location>
    <ligand>
        <name>UTP</name>
        <dbReference type="ChEBI" id="CHEBI:46398"/>
    </ligand>
</feature>
<feature type="binding site" evidence="1">
    <location>
        <position position="357"/>
    </location>
    <ligand>
        <name>L-glutamine</name>
        <dbReference type="ChEBI" id="CHEBI:58359"/>
    </ligand>
</feature>
<feature type="binding site" evidence="1">
    <location>
        <begin position="385"/>
        <end position="388"/>
    </location>
    <ligand>
        <name>L-glutamine</name>
        <dbReference type="ChEBI" id="CHEBI:58359"/>
    </ligand>
</feature>
<feature type="binding site" evidence="1">
    <location>
        <position position="408"/>
    </location>
    <ligand>
        <name>L-glutamine</name>
        <dbReference type="ChEBI" id="CHEBI:58359"/>
    </ligand>
</feature>
<feature type="binding site" evidence="1">
    <location>
        <position position="465"/>
    </location>
    <ligand>
        <name>L-glutamine</name>
        <dbReference type="ChEBI" id="CHEBI:58359"/>
    </ligand>
</feature>
<name>PYRG_FLAPJ</name>
<gene>
    <name evidence="1" type="primary">pyrG</name>
    <name type="ordered locus">FP1899</name>
</gene>
<protein>
    <recommendedName>
        <fullName evidence="1">CTP synthase</fullName>
        <ecNumber evidence="1">6.3.4.2</ecNumber>
    </recommendedName>
    <alternativeName>
        <fullName evidence="1">Cytidine 5'-triphosphate synthase</fullName>
    </alternativeName>
    <alternativeName>
        <fullName evidence="1">Cytidine triphosphate synthetase</fullName>
        <shortName evidence="1">CTP synthetase</shortName>
        <shortName evidence="1">CTPS</shortName>
    </alternativeName>
    <alternativeName>
        <fullName evidence="1">UTP--ammonia ligase</fullName>
    </alternativeName>
</protein>
<reference key="1">
    <citation type="journal article" date="2007" name="Nat. Biotechnol.">
        <title>Complete genome sequence of the fish pathogen Flavobacterium psychrophilum.</title>
        <authorList>
            <person name="Duchaud E."/>
            <person name="Boussaha M."/>
            <person name="Loux V."/>
            <person name="Bernardet J.-F."/>
            <person name="Michel C."/>
            <person name="Kerouault B."/>
            <person name="Mondot S."/>
            <person name="Nicolas P."/>
            <person name="Bossy R."/>
            <person name="Caron C."/>
            <person name="Bessieres P."/>
            <person name="Gibrat J.-F."/>
            <person name="Claverol S."/>
            <person name="Dumetz F."/>
            <person name="Le Henaff M."/>
            <person name="Benmansour A."/>
        </authorList>
    </citation>
    <scope>NUCLEOTIDE SEQUENCE [LARGE SCALE GENOMIC DNA]</scope>
    <source>
        <strain>ATCC 49511 / DSM 21280 / CIP 103535 / JIP02/86</strain>
    </source>
</reference>
<sequence length="537" mass="59920">MNQTKYIFVTGGVTSSLGKGIIAASLAKLLQARGYRTTIQKFDPYINVDPGTLNPYEHGECYVTNDGAETDLDLGHYERFLNVPTSQANNVTTGRIYLSVIEKERRGEFLGKTVQVVPHITNEIKERMQLLGKSGDYDIVITEIGGTVGDIESLPYIESVRQLVWELGENNGIVIHLTLVPFLAAAGELKTKPTQHSVKTLMESGIKADILVCRTEYELSEDLRHKLALFCNVKREAVIQSIDASTIYDVPNLMLEEGLDKVALKKLDLPEKSTPDLKQWNEFLQKHKNPKHEVSIGLVGKYVELQDSYKSILEAFIHAGATNETKVNVISIHSEFLDVNSADEQLKGLDGILVAPGFGGRGIEGKIETVRYAREKNIPFLGICLGMQMAVIEYSRNVLGYTDANSTEMNQNTSHPVINLMEEQKTITDKGGTMRLGAWKCHLSENTLAHKIYGQSDILERHRHRYEFNSEYLEVLQKAGLKASGVNPETGLVEVIELENHPFFIGVQYHPEYKSTVLAPHPLFVSFIAAAVKHKNK</sequence>
<accession>A6H0U1</accession>
<proteinExistence type="inferred from homology"/>
<keyword id="KW-0067">ATP-binding</keyword>
<keyword id="KW-0315">Glutamine amidotransferase</keyword>
<keyword id="KW-0436">Ligase</keyword>
<keyword id="KW-0460">Magnesium</keyword>
<keyword id="KW-0479">Metal-binding</keyword>
<keyword id="KW-0547">Nucleotide-binding</keyword>
<keyword id="KW-0665">Pyrimidine biosynthesis</keyword>
<keyword id="KW-1185">Reference proteome</keyword>
<comment type="function">
    <text evidence="1">Catalyzes the ATP-dependent amination of UTP to CTP with either L-glutamine or ammonia as the source of nitrogen. Regulates intracellular CTP levels through interactions with the four ribonucleotide triphosphates.</text>
</comment>
<comment type="catalytic activity">
    <reaction evidence="1">
        <text>UTP + L-glutamine + ATP + H2O = CTP + L-glutamate + ADP + phosphate + 2 H(+)</text>
        <dbReference type="Rhea" id="RHEA:26426"/>
        <dbReference type="ChEBI" id="CHEBI:15377"/>
        <dbReference type="ChEBI" id="CHEBI:15378"/>
        <dbReference type="ChEBI" id="CHEBI:29985"/>
        <dbReference type="ChEBI" id="CHEBI:30616"/>
        <dbReference type="ChEBI" id="CHEBI:37563"/>
        <dbReference type="ChEBI" id="CHEBI:43474"/>
        <dbReference type="ChEBI" id="CHEBI:46398"/>
        <dbReference type="ChEBI" id="CHEBI:58359"/>
        <dbReference type="ChEBI" id="CHEBI:456216"/>
        <dbReference type="EC" id="6.3.4.2"/>
    </reaction>
</comment>
<comment type="catalytic activity">
    <reaction evidence="1">
        <text>L-glutamine + H2O = L-glutamate + NH4(+)</text>
        <dbReference type="Rhea" id="RHEA:15889"/>
        <dbReference type="ChEBI" id="CHEBI:15377"/>
        <dbReference type="ChEBI" id="CHEBI:28938"/>
        <dbReference type="ChEBI" id="CHEBI:29985"/>
        <dbReference type="ChEBI" id="CHEBI:58359"/>
    </reaction>
</comment>
<comment type="catalytic activity">
    <reaction evidence="1">
        <text>UTP + NH4(+) + ATP = CTP + ADP + phosphate + 2 H(+)</text>
        <dbReference type="Rhea" id="RHEA:16597"/>
        <dbReference type="ChEBI" id="CHEBI:15378"/>
        <dbReference type="ChEBI" id="CHEBI:28938"/>
        <dbReference type="ChEBI" id="CHEBI:30616"/>
        <dbReference type="ChEBI" id="CHEBI:37563"/>
        <dbReference type="ChEBI" id="CHEBI:43474"/>
        <dbReference type="ChEBI" id="CHEBI:46398"/>
        <dbReference type="ChEBI" id="CHEBI:456216"/>
    </reaction>
</comment>
<comment type="activity regulation">
    <text evidence="1">Allosterically activated by GTP, when glutamine is the substrate; GTP has no effect on the reaction when ammonia is the substrate. The allosteric effector GTP functions by stabilizing the protein conformation that binds the tetrahedral intermediate(s) formed during glutamine hydrolysis. Inhibited by the product CTP, via allosteric rather than competitive inhibition.</text>
</comment>
<comment type="pathway">
    <text evidence="1">Pyrimidine metabolism; CTP biosynthesis via de novo pathway; CTP from UDP: step 2/2.</text>
</comment>
<comment type="subunit">
    <text evidence="1">Homotetramer.</text>
</comment>
<comment type="miscellaneous">
    <text evidence="1">CTPSs have evolved a hybrid strategy for distinguishing between UTP and CTP. The overlapping regions of the product feedback inhibitory and substrate sites recognize a common feature in both compounds, the triphosphate moiety. To differentiate isosteric substrate and product pyrimidine rings, an additional pocket far from the expected kinase/ligase catalytic site, specifically recognizes the cytosine and ribose portions of the product inhibitor.</text>
</comment>
<comment type="similarity">
    <text evidence="1">Belongs to the CTP synthase family.</text>
</comment>
<evidence type="ECO:0000255" key="1">
    <source>
        <dbReference type="HAMAP-Rule" id="MF_01227"/>
    </source>
</evidence>
<dbReference type="EC" id="6.3.4.2" evidence="1"/>
<dbReference type="EMBL" id="AM398681">
    <property type="protein sequence ID" value="CAL43965.1"/>
    <property type="molecule type" value="Genomic_DNA"/>
</dbReference>
<dbReference type="RefSeq" id="WP_011964003.1">
    <property type="nucleotide sequence ID" value="NC_009613.3"/>
</dbReference>
<dbReference type="RefSeq" id="YP_001296767.1">
    <property type="nucleotide sequence ID" value="NC_009613.3"/>
</dbReference>
<dbReference type="SMR" id="A6H0U1"/>
<dbReference type="STRING" id="402612.FP1899"/>
<dbReference type="EnsemblBacteria" id="CAL43965">
    <property type="protein sequence ID" value="CAL43965"/>
    <property type="gene ID" value="FP1899"/>
</dbReference>
<dbReference type="KEGG" id="fps:FP1899"/>
<dbReference type="PATRIC" id="fig|402612.5.peg.1925"/>
<dbReference type="eggNOG" id="COG0504">
    <property type="taxonomic scope" value="Bacteria"/>
</dbReference>
<dbReference type="HOGENOM" id="CLU_011675_5_0_10"/>
<dbReference type="OrthoDB" id="9801107at2"/>
<dbReference type="UniPathway" id="UPA00159">
    <property type="reaction ID" value="UER00277"/>
</dbReference>
<dbReference type="Proteomes" id="UP000006394">
    <property type="component" value="Chromosome"/>
</dbReference>
<dbReference type="GO" id="GO:0005829">
    <property type="term" value="C:cytosol"/>
    <property type="evidence" value="ECO:0007669"/>
    <property type="project" value="TreeGrafter"/>
</dbReference>
<dbReference type="GO" id="GO:0005524">
    <property type="term" value="F:ATP binding"/>
    <property type="evidence" value="ECO:0007669"/>
    <property type="project" value="UniProtKB-KW"/>
</dbReference>
<dbReference type="GO" id="GO:0003883">
    <property type="term" value="F:CTP synthase activity"/>
    <property type="evidence" value="ECO:0007669"/>
    <property type="project" value="UniProtKB-UniRule"/>
</dbReference>
<dbReference type="GO" id="GO:0004359">
    <property type="term" value="F:glutaminase activity"/>
    <property type="evidence" value="ECO:0007669"/>
    <property type="project" value="RHEA"/>
</dbReference>
<dbReference type="GO" id="GO:0042802">
    <property type="term" value="F:identical protein binding"/>
    <property type="evidence" value="ECO:0007669"/>
    <property type="project" value="TreeGrafter"/>
</dbReference>
<dbReference type="GO" id="GO:0046872">
    <property type="term" value="F:metal ion binding"/>
    <property type="evidence" value="ECO:0007669"/>
    <property type="project" value="UniProtKB-KW"/>
</dbReference>
<dbReference type="GO" id="GO:0044210">
    <property type="term" value="P:'de novo' CTP biosynthetic process"/>
    <property type="evidence" value="ECO:0007669"/>
    <property type="project" value="UniProtKB-UniRule"/>
</dbReference>
<dbReference type="GO" id="GO:0019856">
    <property type="term" value="P:pyrimidine nucleobase biosynthetic process"/>
    <property type="evidence" value="ECO:0007669"/>
    <property type="project" value="TreeGrafter"/>
</dbReference>
<dbReference type="CDD" id="cd03113">
    <property type="entry name" value="CTPS_N"/>
    <property type="match status" value="1"/>
</dbReference>
<dbReference type="CDD" id="cd01746">
    <property type="entry name" value="GATase1_CTP_Synthase"/>
    <property type="match status" value="1"/>
</dbReference>
<dbReference type="FunFam" id="3.40.50.300:FF:000009">
    <property type="entry name" value="CTP synthase"/>
    <property type="match status" value="1"/>
</dbReference>
<dbReference type="FunFam" id="3.40.50.880:FF:000002">
    <property type="entry name" value="CTP synthase"/>
    <property type="match status" value="1"/>
</dbReference>
<dbReference type="Gene3D" id="3.40.50.880">
    <property type="match status" value="1"/>
</dbReference>
<dbReference type="Gene3D" id="3.40.50.300">
    <property type="entry name" value="P-loop containing nucleotide triphosphate hydrolases"/>
    <property type="match status" value="1"/>
</dbReference>
<dbReference type="HAMAP" id="MF_01227">
    <property type="entry name" value="PyrG"/>
    <property type="match status" value="1"/>
</dbReference>
<dbReference type="InterPro" id="IPR029062">
    <property type="entry name" value="Class_I_gatase-like"/>
</dbReference>
<dbReference type="InterPro" id="IPR004468">
    <property type="entry name" value="CTP_synthase"/>
</dbReference>
<dbReference type="InterPro" id="IPR017456">
    <property type="entry name" value="CTP_synthase_N"/>
</dbReference>
<dbReference type="InterPro" id="IPR017926">
    <property type="entry name" value="GATASE"/>
</dbReference>
<dbReference type="InterPro" id="IPR033828">
    <property type="entry name" value="GATase1_CTP_Synthase"/>
</dbReference>
<dbReference type="InterPro" id="IPR027417">
    <property type="entry name" value="P-loop_NTPase"/>
</dbReference>
<dbReference type="NCBIfam" id="NF003792">
    <property type="entry name" value="PRK05380.1"/>
    <property type="match status" value="1"/>
</dbReference>
<dbReference type="NCBIfam" id="TIGR00337">
    <property type="entry name" value="PyrG"/>
    <property type="match status" value="1"/>
</dbReference>
<dbReference type="PANTHER" id="PTHR11550">
    <property type="entry name" value="CTP SYNTHASE"/>
    <property type="match status" value="1"/>
</dbReference>
<dbReference type="PANTHER" id="PTHR11550:SF0">
    <property type="entry name" value="CTP SYNTHASE-RELATED"/>
    <property type="match status" value="1"/>
</dbReference>
<dbReference type="Pfam" id="PF06418">
    <property type="entry name" value="CTP_synth_N"/>
    <property type="match status" value="1"/>
</dbReference>
<dbReference type="Pfam" id="PF00117">
    <property type="entry name" value="GATase"/>
    <property type="match status" value="1"/>
</dbReference>
<dbReference type="SUPFAM" id="SSF52317">
    <property type="entry name" value="Class I glutamine amidotransferase-like"/>
    <property type="match status" value="1"/>
</dbReference>
<dbReference type="SUPFAM" id="SSF52540">
    <property type="entry name" value="P-loop containing nucleoside triphosphate hydrolases"/>
    <property type="match status" value="1"/>
</dbReference>
<dbReference type="PROSITE" id="PS51273">
    <property type="entry name" value="GATASE_TYPE_1"/>
    <property type="match status" value="1"/>
</dbReference>
<organism>
    <name type="scientific">Flavobacterium psychrophilum (strain ATCC 49511 / DSM 21280 / CIP 103535 / JIP02/86)</name>
    <dbReference type="NCBI Taxonomy" id="402612"/>
    <lineage>
        <taxon>Bacteria</taxon>
        <taxon>Pseudomonadati</taxon>
        <taxon>Bacteroidota</taxon>
        <taxon>Flavobacteriia</taxon>
        <taxon>Flavobacteriales</taxon>
        <taxon>Flavobacteriaceae</taxon>
        <taxon>Flavobacterium</taxon>
    </lineage>
</organism>